<protein>
    <recommendedName>
        <fullName>Kappa 1b-bungarotoxin</fullName>
    </recommendedName>
</protein>
<organism>
    <name type="scientific">Bungarus candidus</name>
    <name type="common">Malayan krait</name>
    <dbReference type="NCBI Taxonomy" id="92438"/>
    <lineage>
        <taxon>Eukaryota</taxon>
        <taxon>Metazoa</taxon>
        <taxon>Chordata</taxon>
        <taxon>Craniata</taxon>
        <taxon>Vertebrata</taxon>
        <taxon>Euteleostomi</taxon>
        <taxon>Lepidosauria</taxon>
        <taxon>Squamata</taxon>
        <taxon>Bifurcata</taxon>
        <taxon>Unidentata</taxon>
        <taxon>Episquamata</taxon>
        <taxon>Toxicofera</taxon>
        <taxon>Serpentes</taxon>
        <taxon>Colubroidea</taxon>
        <taxon>Elapidae</taxon>
        <taxon>Bungarinae</taxon>
        <taxon>Bungarus</taxon>
    </lineage>
</organism>
<accession>Q8AY55</accession>
<comment type="function">
    <text evidence="2">Postsynaptic neurotoxin that binds and inhibits neuronal nicotinic acetylcholine receptors (nAChR) with high affinity (IC(50)&lt;100 nM). Is a selective, and slowly reversible antagonist of alpha-3/CHRNA3-containing and some alpha-4/CHRNA4-containing AChRs.</text>
</comment>
<comment type="subunit">
    <text evidence="3">Homo- and heterodimer; non-covalently linked.</text>
</comment>
<comment type="subcellular location">
    <subcellularLocation>
        <location evidence="1">Secreted</location>
    </subcellularLocation>
</comment>
<comment type="tissue specificity">
    <text evidence="4">Expressed by the venom gland.</text>
</comment>
<comment type="similarity">
    <text evidence="4">Belongs to the three-finger toxin family. Long-chain subfamily. Kappa-neurotoxin sub-subfamily.</text>
</comment>
<proteinExistence type="inferred from homology"/>
<evidence type="ECO:0000250" key="1"/>
<evidence type="ECO:0000250" key="2">
    <source>
        <dbReference type="UniProtKB" id="P01398"/>
    </source>
</evidence>
<evidence type="ECO:0000250" key="3">
    <source>
        <dbReference type="UniProtKB" id="P15816"/>
    </source>
</evidence>
<evidence type="ECO:0000305" key="4"/>
<keyword id="KW-0008">Acetylcholine receptor inhibiting toxin</keyword>
<keyword id="KW-1015">Disulfide bond</keyword>
<keyword id="KW-0872">Ion channel impairing toxin</keyword>
<keyword id="KW-0528">Neurotoxin</keyword>
<keyword id="KW-0629">Postsynaptic neurotoxin</keyword>
<keyword id="KW-0964">Secreted</keyword>
<keyword id="KW-0732">Signal</keyword>
<keyword id="KW-0800">Toxin</keyword>
<name>3LKB_BUNCA</name>
<reference key="1">
    <citation type="submission" date="2001-10" db="EMBL/GenBank/DDBJ databases">
        <title>Structural and functional genomics of Bungarus candidus.</title>
        <authorList>
            <person name="Tsai I.H."/>
            <person name="Wang Y.M."/>
            <person name="Hsu H.Y."/>
        </authorList>
    </citation>
    <scope>NUCLEOTIDE SEQUENCE [MRNA]</scope>
    <source>
        <tissue>Venom gland</tissue>
    </source>
</reference>
<sequence>MKTLLLTLVVVTIVCLDLGYTRTCLISPSSTPQTCPQGQGICFLKAQCDKFCSIRGPVIEQGCVATCPQFRSNYRSLLCCTTDNCNH</sequence>
<dbReference type="EMBL" id="AY057873">
    <property type="protein sequence ID" value="AAL30055.1"/>
    <property type="molecule type" value="mRNA"/>
</dbReference>
<dbReference type="BMRB" id="Q8AY55"/>
<dbReference type="SMR" id="Q8AY55"/>
<dbReference type="GO" id="GO:0005576">
    <property type="term" value="C:extracellular region"/>
    <property type="evidence" value="ECO:0007669"/>
    <property type="project" value="UniProtKB-SubCell"/>
</dbReference>
<dbReference type="GO" id="GO:0030550">
    <property type="term" value="F:acetylcholine receptor inhibitor activity"/>
    <property type="evidence" value="ECO:0007669"/>
    <property type="project" value="UniProtKB-KW"/>
</dbReference>
<dbReference type="GO" id="GO:0099106">
    <property type="term" value="F:ion channel regulator activity"/>
    <property type="evidence" value="ECO:0007669"/>
    <property type="project" value="UniProtKB-KW"/>
</dbReference>
<dbReference type="GO" id="GO:0090729">
    <property type="term" value="F:toxin activity"/>
    <property type="evidence" value="ECO:0007669"/>
    <property type="project" value="UniProtKB-KW"/>
</dbReference>
<dbReference type="CDD" id="cd00206">
    <property type="entry name" value="TFP_snake_toxin"/>
    <property type="match status" value="1"/>
</dbReference>
<dbReference type="Gene3D" id="2.10.60.10">
    <property type="entry name" value="CD59"/>
    <property type="match status" value="1"/>
</dbReference>
<dbReference type="InterPro" id="IPR003571">
    <property type="entry name" value="Snake_3FTx"/>
</dbReference>
<dbReference type="InterPro" id="IPR045860">
    <property type="entry name" value="Snake_toxin-like_sf"/>
</dbReference>
<dbReference type="InterPro" id="IPR018354">
    <property type="entry name" value="Snake_toxin_con_site"/>
</dbReference>
<dbReference type="InterPro" id="IPR054131">
    <property type="entry name" value="Toxin_cobra-type"/>
</dbReference>
<dbReference type="Pfam" id="PF21947">
    <property type="entry name" value="Toxin_cobra-type"/>
    <property type="match status" value="1"/>
</dbReference>
<dbReference type="SUPFAM" id="SSF57302">
    <property type="entry name" value="Snake toxin-like"/>
    <property type="match status" value="1"/>
</dbReference>
<dbReference type="PROSITE" id="PS00272">
    <property type="entry name" value="SNAKE_TOXIN"/>
    <property type="match status" value="1"/>
</dbReference>
<feature type="signal peptide" evidence="1">
    <location>
        <begin position="1"/>
        <end position="21"/>
    </location>
</feature>
<feature type="chain" id="PRO_0000035409" description="Kappa 1b-bungarotoxin">
    <location>
        <begin position="22"/>
        <end position="87"/>
    </location>
</feature>
<feature type="disulfide bond" evidence="2">
    <location>
        <begin position="24"/>
        <end position="42"/>
    </location>
</feature>
<feature type="disulfide bond" evidence="2">
    <location>
        <begin position="35"/>
        <end position="63"/>
    </location>
</feature>
<feature type="disulfide bond" evidence="2">
    <location>
        <begin position="48"/>
        <end position="52"/>
    </location>
</feature>
<feature type="disulfide bond" evidence="2">
    <location>
        <begin position="67"/>
        <end position="79"/>
    </location>
</feature>
<feature type="disulfide bond" evidence="2">
    <location>
        <begin position="80"/>
        <end position="85"/>
    </location>
</feature>